<keyword id="KW-0687">Ribonucleoprotein</keyword>
<keyword id="KW-0689">Ribosomal protein</keyword>
<reference key="1">
    <citation type="journal article" date="2009" name="Proc. Natl. Acad. Sci. U.S.A.">
        <title>Biogeography of the Sulfolobus islandicus pan-genome.</title>
        <authorList>
            <person name="Reno M.L."/>
            <person name="Held N.L."/>
            <person name="Fields C.J."/>
            <person name="Burke P.V."/>
            <person name="Whitaker R.J."/>
        </authorList>
    </citation>
    <scope>NUCLEOTIDE SEQUENCE [LARGE SCALE GENOMIC DNA]</scope>
    <source>
        <strain>M.14.25 / Kamchatka #1</strain>
    </source>
</reference>
<organism>
    <name type="scientific">Saccharolobus islandicus (strain M.14.25 / Kamchatka #1)</name>
    <name type="common">Sulfolobus islandicus</name>
    <dbReference type="NCBI Taxonomy" id="427317"/>
    <lineage>
        <taxon>Archaea</taxon>
        <taxon>Thermoproteota</taxon>
        <taxon>Thermoprotei</taxon>
        <taxon>Sulfolobales</taxon>
        <taxon>Sulfolobaceae</taxon>
        <taxon>Saccharolobus</taxon>
    </lineage>
</organism>
<dbReference type="EMBL" id="CP001400">
    <property type="protein sequence ID" value="ACP37124.1"/>
    <property type="molecule type" value="Genomic_DNA"/>
</dbReference>
<dbReference type="RefSeq" id="WP_012710410.1">
    <property type="nucleotide sequence ID" value="NC_012588.1"/>
</dbReference>
<dbReference type="SMR" id="C3MU90"/>
<dbReference type="KEGG" id="sia:M1425_0234"/>
<dbReference type="HOGENOM" id="CLU_179008_0_0_2"/>
<dbReference type="Proteomes" id="UP000001350">
    <property type="component" value="Chromosome"/>
</dbReference>
<dbReference type="GO" id="GO:1990904">
    <property type="term" value="C:ribonucleoprotein complex"/>
    <property type="evidence" value="ECO:0007669"/>
    <property type="project" value="UniProtKB-KW"/>
</dbReference>
<dbReference type="GO" id="GO:0005840">
    <property type="term" value="C:ribosome"/>
    <property type="evidence" value="ECO:0007669"/>
    <property type="project" value="UniProtKB-KW"/>
</dbReference>
<dbReference type="GO" id="GO:0003735">
    <property type="term" value="F:structural constituent of ribosome"/>
    <property type="evidence" value="ECO:0007669"/>
    <property type="project" value="InterPro"/>
</dbReference>
<dbReference type="GO" id="GO:0006412">
    <property type="term" value="P:translation"/>
    <property type="evidence" value="ECO:0007669"/>
    <property type="project" value="UniProtKB-UniRule"/>
</dbReference>
<dbReference type="HAMAP" id="MF_00499">
    <property type="entry name" value="Ribosomal_eL13"/>
    <property type="match status" value="1"/>
</dbReference>
<dbReference type="InterPro" id="IPR001380">
    <property type="entry name" value="Ribosomal_eL13"/>
</dbReference>
<dbReference type="NCBIfam" id="NF008914">
    <property type="entry name" value="PRK12277.1"/>
    <property type="match status" value="1"/>
</dbReference>
<dbReference type="Pfam" id="PF01294">
    <property type="entry name" value="Ribosomal_L13e"/>
    <property type="match status" value="1"/>
</dbReference>
<sequence length="79" mass="9302">MEFPKALIKRPNYHFEYPHKRKDKRIGRGFSIGELEKAGLNINNARKLGIIVDIRRKSVHEENVEVLKKFLEQLSNQKS</sequence>
<name>RL13E_SACI4</name>
<feature type="chain" id="PRO_1000206486" description="Large ribosomal subunit protein eL13">
    <location>
        <begin position="1"/>
        <end position="79"/>
    </location>
</feature>
<protein>
    <recommendedName>
        <fullName evidence="1">Large ribosomal subunit protein eL13</fullName>
    </recommendedName>
    <alternativeName>
        <fullName evidence="2">50S ribosomal protein L13e</fullName>
    </alternativeName>
</protein>
<accession>C3MU90</accession>
<gene>
    <name evidence="1" type="primary">rpl13e</name>
    <name type="ordered locus">M1425_0234</name>
</gene>
<comment type="similarity">
    <text evidence="1">Belongs to the eukaryotic ribosomal protein eL13 family.</text>
</comment>
<proteinExistence type="inferred from homology"/>
<evidence type="ECO:0000255" key="1">
    <source>
        <dbReference type="HAMAP-Rule" id="MF_00499"/>
    </source>
</evidence>
<evidence type="ECO:0000305" key="2"/>